<organism>
    <name type="scientific">Drosophila melanogaster</name>
    <name type="common">Fruit fly</name>
    <dbReference type="NCBI Taxonomy" id="7227"/>
    <lineage>
        <taxon>Eukaryota</taxon>
        <taxon>Metazoa</taxon>
        <taxon>Ecdysozoa</taxon>
        <taxon>Arthropoda</taxon>
        <taxon>Hexapoda</taxon>
        <taxon>Insecta</taxon>
        <taxon>Pterygota</taxon>
        <taxon>Neoptera</taxon>
        <taxon>Endopterygota</taxon>
        <taxon>Diptera</taxon>
        <taxon>Brachycera</taxon>
        <taxon>Muscomorpha</taxon>
        <taxon>Ephydroidea</taxon>
        <taxon>Drosophilidae</taxon>
        <taxon>Drosophila</taxon>
        <taxon>Sophophora</taxon>
    </lineage>
</organism>
<protein>
    <recommendedName>
        <fullName>Larval serum protein 1 alpha chain</fullName>
    </recommendedName>
    <alternativeName>
        <fullName>Hexamerin-1-alpha</fullName>
    </alternativeName>
</protein>
<keyword id="KW-1185">Reference proteome</keyword>
<keyword id="KW-0964">Secreted</keyword>
<keyword id="KW-0732">Signal</keyword>
<keyword id="KW-0758">Storage protein</keyword>
<sequence>MKFAIAFLACVAVVTATAYHKTHDIKVADKAFLMKQKFLFEIVYRVEDPLMFEEYIAMGKQFYFDKEHYTHFDLYMEKFFEAHKAHALLPKGEFFGALVKHHAKQARGLFNFFYYAKDWETFMTNVAFARMHFNEGMFVYALTLAVIHRDDFHGLVLPAIHEIFPQFFFNSKFVMEAEKFDYEMWMKTSLYEKEYMDVYHKIPTFSSYEHGYKQGMAYGYGKTHGHGQTYEHEFGSMYQTSDYMYMKDFKTWQWWKLMGLGEHWYSESNYILRENIYEYNQESNWLTMMKDVKKFYMPVDYSRDLYLYNEESKLSYFTEDLGWNSYWYYLNMDYSFFLDGKTFGLQNDRRGEWWLYNVHQLLSRYHMERLSHGLGEIPQFSWFHQIEMGYDPQLIYYNGIGYSYRKNYYELETYGNFEMLDKITGFQQRIQNIVELGYYQTTDGHMIDLRKPESIEIIGNMLQGNVDAIDNIFFQFWYMLAHMYFADTHYYQMEVYPNVMLNFETMMRDPMFYMFYKSIAQVYFQFMHHLPKYTKEQLLMPGVTLKHVEVSELVTYFDLVDFDVTNMLNGKMVFHEGQFLWDKSLFARQMRLNHKPFSYTYTIDSARDEKVVIRAFLGPKFDEYGRMISLTDNRMNFMEIDEFTYTLKTGSNLITRKSTDFAWTVKDRTTYTELYYYTMMAFDGKYDYPLDLTEPHCGFPDRLVLPMGWKKGMPMQMFFMVVPYMAPQHEQFSTFDYTYSCGIGSGARHVDSLPFGYPFDREINEYEFHVPNMYFKDVTIYHADTMEKYYNYKEYTNYGHFDYSFFNDYYTKYFKL</sequence>
<proteinExistence type="evidence at transcript level"/>
<dbReference type="EMBL" id="AE014298">
    <property type="protein sequence ID" value="AAF48168.2"/>
    <property type="molecule type" value="Genomic_DNA"/>
</dbReference>
<dbReference type="EMBL" id="X03872">
    <property type="protein sequence ID" value="CAA27506.1"/>
    <property type="molecule type" value="Genomic_DNA"/>
</dbReference>
<dbReference type="EMBL" id="X03368">
    <property type="protein sequence ID" value="CAA27066.1"/>
    <property type="molecule type" value="Genomic_DNA"/>
</dbReference>
<dbReference type="PIR" id="A27144">
    <property type="entry name" value="A27144"/>
</dbReference>
<dbReference type="RefSeq" id="NP_511138.2">
    <property type="nucleotide sequence ID" value="NM_078583.3"/>
</dbReference>
<dbReference type="SMR" id="P11995"/>
<dbReference type="BioGRID" id="58598">
    <property type="interactions" value="2"/>
</dbReference>
<dbReference type="ComplexPortal" id="CPX-2224">
    <property type="entry name" value="Larval serum protein complex"/>
</dbReference>
<dbReference type="FunCoup" id="P11995">
    <property type="interactions" value="5"/>
</dbReference>
<dbReference type="IntAct" id="P11995">
    <property type="interactions" value="1"/>
</dbReference>
<dbReference type="STRING" id="7227.FBpp0073484"/>
<dbReference type="PaxDb" id="7227-FBpp0073484"/>
<dbReference type="EnsemblMetazoa" id="FBtr0073651">
    <property type="protein sequence ID" value="FBpp0073484"/>
    <property type="gene ID" value="FBgn0002562"/>
</dbReference>
<dbReference type="GeneID" id="32199"/>
<dbReference type="KEGG" id="dme:Dmel_CG2559"/>
<dbReference type="AGR" id="FB:FBgn0002562"/>
<dbReference type="CTD" id="32199"/>
<dbReference type="FlyBase" id="FBgn0002562">
    <property type="gene designation" value="Lsp1alpha"/>
</dbReference>
<dbReference type="VEuPathDB" id="VectorBase:FBgn0002562"/>
<dbReference type="eggNOG" id="ENOG502QR98">
    <property type="taxonomic scope" value="Eukaryota"/>
</dbReference>
<dbReference type="GeneTree" id="ENSGT00940000165243"/>
<dbReference type="HOGENOM" id="CLU_012213_1_0_1"/>
<dbReference type="InParanoid" id="P11995"/>
<dbReference type="OMA" id="SRYHMER"/>
<dbReference type="OrthoDB" id="6371642at2759"/>
<dbReference type="PhylomeDB" id="P11995"/>
<dbReference type="BioGRID-ORCS" id="32199">
    <property type="hits" value="0 hits in 1 CRISPR screen"/>
</dbReference>
<dbReference type="GenomeRNAi" id="32199"/>
<dbReference type="PRO" id="PR:P11995"/>
<dbReference type="Proteomes" id="UP000000803">
    <property type="component" value="Chromosome X"/>
</dbReference>
<dbReference type="Bgee" id="FBgn0002562">
    <property type="expression patterns" value="Expressed in saliva-secreting gland and 21 other cell types or tissues"/>
</dbReference>
<dbReference type="GO" id="GO:0005615">
    <property type="term" value="C:extracellular space"/>
    <property type="evidence" value="ECO:0000314"/>
    <property type="project" value="FlyBase"/>
</dbReference>
<dbReference type="GO" id="GO:0005616">
    <property type="term" value="C:larval serum protein complex"/>
    <property type="evidence" value="ECO:0000314"/>
    <property type="project" value="FlyBase"/>
</dbReference>
<dbReference type="GO" id="GO:0045735">
    <property type="term" value="F:nutrient reservoir activity"/>
    <property type="evidence" value="ECO:0000315"/>
    <property type="project" value="FlyBase"/>
</dbReference>
<dbReference type="GO" id="GO:0097009">
    <property type="term" value="P:energy homeostasis"/>
    <property type="evidence" value="ECO:0000315"/>
    <property type="project" value="FlyBase"/>
</dbReference>
<dbReference type="FunFam" id="1.10.1280.10:FF:000006">
    <property type="entry name" value="Larval serum protein 1 gamma"/>
    <property type="match status" value="1"/>
</dbReference>
<dbReference type="FunFam" id="1.20.1370.10:FF:000003">
    <property type="entry name" value="Larval serum protein 1 gamma"/>
    <property type="match status" value="1"/>
</dbReference>
<dbReference type="FunFam" id="2.60.40.1520:FF:000002">
    <property type="entry name" value="Larval serum protein 2"/>
    <property type="match status" value="1"/>
</dbReference>
<dbReference type="Gene3D" id="1.10.1280.10">
    <property type="entry name" value="Di-copper center containing domain from catechol oxidase"/>
    <property type="match status" value="1"/>
</dbReference>
<dbReference type="Gene3D" id="2.60.40.1520">
    <property type="entry name" value="Hemocyanin, C-terminal domain"/>
    <property type="match status" value="1"/>
</dbReference>
<dbReference type="Gene3D" id="1.20.1370.10">
    <property type="entry name" value="Hemocyanin, N-terminal domain"/>
    <property type="match status" value="1"/>
</dbReference>
<dbReference type="InterPro" id="IPR008922">
    <property type="entry name" value="Di-copper_centre_dom_sf"/>
</dbReference>
<dbReference type="InterPro" id="IPR013788">
    <property type="entry name" value="Hemocyanin/hexamerin"/>
</dbReference>
<dbReference type="InterPro" id="IPR000896">
    <property type="entry name" value="Hemocyanin/hexamerin_mid_dom"/>
</dbReference>
<dbReference type="InterPro" id="IPR005203">
    <property type="entry name" value="Hemocyanin_C"/>
</dbReference>
<dbReference type="InterPro" id="IPR037020">
    <property type="entry name" value="Hemocyanin_C_sf"/>
</dbReference>
<dbReference type="InterPro" id="IPR005204">
    <property type="entry name" value="Hemocyanin_N"/>
</dbReference>
<dbReference type="InterPro" id="IPR036697">
    <property type="entry name" value="Hemocyanin_N_sf"/>
</dbReference>
<dbReference type="InterPro" id="IPR014756">
    <property type="entry name" value="Ig_E-set"/>
</dbReference>
<dbReference type="PANTHER" id="PTHR11511:SF5">
    <property type="entry name" value="FAT-BODY PROTEIN 1-RELATED"/>
    <property type="match status" value="1"/>
</dbReference>
<dbReference type="PANTHER" id="PTHR11511">
    <property type="entry name" value="LARVAL STORAGE PROTEIN/PHENOLOXIDASE"/>
    <property type="match status" value="1"/>
</dbReference>
<dbReference type="Pfam" id="PF03723">
    <property type="entry name" value="Hemocyanin_C"/>
    <property type="match status" value="1"/>
</dbReference>
<dbReference type="Pfam" id="PF00372">
    <property type="entry name" value="Hemocyanin_M"/>
    <property type="match status" value="1"/>
</dbReference>
<dbReference type="Pfam" id="PF03722">
    <property type="entry name" value="Hemocyanin_N"/>
    <property type="match status" value="1"/>
</dbReference>
<dbReference type="PRINTS" id="PR00187">
    <property type="entry name" value="HAEMOCYANIN"/>
</dbReference>
<dbReference type="SUPFAM" id="SSF48056">
    <property type="entry name" value="Di-copper centre-containing domain"/>
    <property type="match status" value="1"/>
</dbReference>
<dbReference type="SUPFAM" id="SSF81296">
    <property type="entry name" value="E set domains"/>
    <property type="match status" value="1"/>
</dbReference>
<dbReference type="SUPFAM" id="SSF48050">
    <property type="entry name" value="Hemocyanin, N-terminal domain"/>
    <property type="match status" value="1"/>
</dbReference>
<dbReference type="PROSITE" id="PS00210">
    <property type="entry name" value="HEMOCYANIN_2"/>
    <property type="match status" value="1"/>
</dbReference>
<gene>
    <name type="primary">Lsp1alpha</name>
    <name type="synonym">LSP1-a</name>
    <name type="ORF">CG2559</name>
</gene>
<reference key="1">
    <citation type="journal article" date="2000" name="Science">
        <title>The genome sequence of Drosophila melanogaster.</title>
        <authorList>
            <person name="Adams M.D."/>
            <person name="Celniker S.E."/>
            <person name="Holt R.A."/>
            <person name="Evans C.A."/>
            <person name="Gocayne J.D."/>
            <person name="Amanatides P.G."/>
            <person name="Scherer S.E."/>
            <person name="Li P.W."/>
            <person name="Hoskins R.A."/>
            <person name="Galle R.F."/>
            <person name="George R.A."/>
            <person name="Lewis S.E."/>
            <person name="Richards S."/>
            <person name="Ashburner M."/>
            <person name="Henderson S.N."/>
            <person name="Sutton G.G."/>
            <person name="Wortman J.R."/>
            <person name="Yandell M.D."/>
            <person name="Zhang Q."/>
            <person name="Chen L.X."/>
            <person name="Brandon R.C."/>
            <person name="Rogers Y.-H.C."/>
            <person name="Blazej R.G."/>
            <person name="Champe M."/>
            <person name="Pfeiffer B.D."/>
            <person name="Wan K.H."/>
            <person name="Doyle C."/>
            <person name="Baxter E.G."/>
            <person name="Helt G."/>
            <person name="Nelson C.R."/>
            <person name="Miklos G.L.G."/>
            <person name="Abril J.F."/>
            <person name="Agbayani A."/>
            <person name="An H.-J."/>
            <person name="Andrews-Pfannkoch C."/>
            <person name="Baldwin D."/>
            <person name="Ballew R.M."/>
            <person name="Basu A."/>
            <person name="Baxendale J."/>
            <person name="Bayraktaroglu L."/>
            <person name="Beasley E.M."/>
            <person name="Beeson K.Y."/>
            <person name="Benos P.V."/>
            <person name="Berman B.P."/>
            <person name="Bhandari D."/>
            <person name="Bolshakov S."/>
            <person name="Borkova D."/>
            <person name="Botchan M.R."/>
            <person name="Bouck J."/>
            <person name="Brokstein P."/>
            <person name="Brottier P."/>
            <person name="Burtis K.C."/>
            <person name="Busam D.A."/>
            <person name="Butler H."/>
            <person name="Cadieu E."/>
            <person name="Center A."/>
            <person name="Chandra I."/>
            <person name="Cherry J.M."/>
            <person name="Cawley S."/>
            <person name="Dahlke C."/>
            <person name="Davenport L.B."/>
            <person name="Davies P."/>
            <person name="de Pablos B."/>
            <person name="Delcher A."/>
            <person name="Deng Z."/>
            <person name="Mays A.D."/>
            <person name="Dew I."/>
            <person name="Dietz S.M."/>
            <person name="Dodson K."/>
            <person name="Doup L.E."/>
            <person name="Downes M."/>
            <person name="Dugan-Rocha S."/>
            <person name="Dunkov B.C."/>
            <person name="Dunn P."/>
            <person name="Durbin K.J."/>
            <person name="Evangelista C.C."/>
            <person name="Ferraz C."/>
            <person name="Ferriera S."/>
            <person name="Fleischmann W."/>
            <person name="Fosler C."/>
            <person name="Gabrielian A.E."/>
            <person name="Garg N.S."/>
            <person name="Gelbart W.M."/>
            <person name="Glasser K."/>
            <person name="Glodek A."/>
            <person name="Gong F."/>
            <person name="Gorrell J.H."/>
            <person name="Gu Z."/>
            <person name="Guan P."/>
            <person name="Harris M."/>
            <person name="Harris N.L."/>
            <person name="Harvey D.A."/>
            <person name="Heiman T.J."/>
            <person name="Hernandez J.R."/>
            <person name="Houck J."/>
            <person name="Hostin D."/>
            <person name="Houston K.A."/>
            <person name="Howland T.J."/>
            <person name="Wei M.-H."/>
            <person name="Ibegwam C."/>
            <person name="Jalali M."/>
            <person name="Kalush F."/>
            <person name="Karpen G.H."/>
            <person name="Ke Z."/>
            <person name="Kennison J.A."/>
            <person name="Ketchum K.A."/>
            <person name="Kimmel B.E."/>
            <person name="Kodira C.D."/>
            <person name="Kraft C.L."/>
            <person name="Kravitz S."/>
            <person name="Kulp D."/>
            <person name="Lai Z."/>
            <person name="Lasko P."/>
            <person name="Lei Y."/>
            <person name="Levitsky A.A."/>
            <person name="Li J.H."/>
            <person name="Li Z."/>
            <person name="Liang Y."/>
            <person name="Lin X."/>
            <person name="Liu X."/>
            <person name="Mattei B."/>
            <person name="McIntosh T.C."/>
            <person name="McLeod M.P."/>
            <person name="McPherson D."/>
            <person name="Merkulov G."/>
            <person name="Milshina N.V."/>
            <person name="Mobarry C."/>
            <person name="Morris J."/>
            <person name="Moshrefi A."/>
            <person name="Mount S.M."/>
            <person name="Moy M."/>
            <person name="Murphy B."/>
            <person name="Murphy L."/>
            <person name="Muzny D.M."/>
            <person name="Nelson D.L."/>
            <person name="Nelson D.R."/>
            <person name="Nelson K.A."/>
            <person name="Nixon K."/>
            <person name="Nusskern D.R."/>
            <person name="Pacleb J.M."/>
            <person name="Palazzolo M."/>
            <person name="Pittman G.S."/>
            <person name="Pan S."/>
            <person name="Pollard J."/>
            <person name="Puri V."/>
            <person name="Reese M.G."/>
            <person name="Reinert K."/>
            <person name="Remington K."/>
            <person name="Saunders R.D.C."/>
            <person name="Scheeler F."/>
            <person name="Shen H."/>
            <person name="Shue B.C."/>
            <person name="Siden-Kiamos I."/>
            <person name="Simpson M."/>
            <person name="Skupski M.P."/>
            <person name="Smith T.J."/>
            <person name="Spier E."/>
            <person name="Spradling A.C."/>
            <person name="Stapleton M."/>
            <person name="Strong R."/>
            <person name="Sun E."/>
            <person name="Svirskas R."/>
            <person name="Tector C."/>
            <person name="Turner R."/>
            <person name="Venter E."/>
            <person name="Wang A.H."/>
            <person name="Wang X."/>
            <person name="Wang Z.-Y."/>
            <person name="Wassarman D.A."/>
            <person name="Weinstock G.M."/>
            <person name="Weissenbach J."/>
            <person name="Williams S.M."/>
            <person name="Woodage T."/>
            <person name="Worley K.C."/>
            <person name="Wu D."/>
            <person name="Yang S."/>
            <person name="Yao Q.A."/>
            <person name="Ye J."/>
            <person name="Yeh R.-F."/>
            <person name="Zaveri J.S."/>
            <person name="Zhan M."/>
            <person name="Zhang G."/>
            <person name="Zhao Q."/>
            <person name="Zheng L."/>
            <person name="Zheng X.H."/>
            <person name="Zhong F.N."/>
            <person name="Zhong W."/>
            <person name="Zhou X."/>
            <person name="Zhu S.C."/>
            <person name="Zhu X."/>
            <person name="Smith H.O."/>
            <person name="Gibbs R.A."/>
            <person name="Myers E.W."/>
            <person name="Rubin G.M."/>
            <person name="Venter J.C."/>
        </authorList>
    </citation>
    <scope>NUCLEOTIDE SEQUENCE [LARGE SCALE GENOMIC DNA]</scope>
    <source>
        <strain>Berkeley</strain>
    </source>
</reference>
<reference key="2">
    <citation type="journal article" date="2002" name="Genome Biol.">
        <title>Annotation of the Drosophila melanogaster euchromatic genome: a systematic review.</title>
        <authorList>
            <person name="Misra S."/>
            <person name="Crosby M.A."/>
            <person name="Mungall C.J."/>
            <person name="Matthews B.B."/>
            <person name="Campbell K.S."/>
            <person name="Hradecky P."/>
            <person name="Huang Y."/>
            <person name="Kaminker J.S."/>
            <person name="Millburn G.H."/>
            <person name="Prochnik S.E."/>
            <person name="Smith C.D."/>
            <person name="Tupy J.L."/>
            <person name="Whitfield E.J."/>
            <person name="Bayraktaroglu L."/>
            <person name="Berman B.P."/>
            <person name="Bettencourt B.R."/>
            <person name="Celniker S.E."/>
            <person name="de Grey A.D.N.J."/>
            <person name="Drysdale R.A."/>
            <person name="Harris N.L."/>
            <person name="Richter J."/>
            <person name="Russo S."/>
            <person name="Schroeder A.J."/>
            <person name="Shu S.Q."/>
            <person name="Stapleton M."/>
            <person name="Yamada C."/>
            <person name="Ashburner M."/>
            <person name="Gelbart W.M."/>
            <person name="Rubin G.M."/>
            <person name="Lewis S.E."/>
        </authorList>
    </citation>
    <scope>GENOME REANNOTATION</scope>
    <source>
        <strain>Berkeley</strain>
    </source>
</reference>
<reference key="3">
    <citation type="journal article" date="1986" name="J. Mol. Biol.">
        <title>Sequence conservation around the 5' ends of the larval serum protein 1 genes of Drosophila melanogaster.</title>
        <authorList>
            <person name="Delaney S.J."/>
            <person name="Smith D.F."/>
            <person name="McClelland A."/>
            <person name="Sunkel C."/>
            <person name="Glover D.M."/>
        </authorList>
    </citation>
    <scope>NUCLEOTIDE SEQUENCE [GENOMIC DNA] OF 1-84</scope>
    <scope>SUBCELLULAR LOCATION</scope>
    <scope>TISSUE SPECIFICITY</scope>
</reference>
<reference key="4">
    <citation type="journal article" date="1985" name="EMBO J.">
        <title>The regulatory domain of a larval serum protein gene in Drosophila melanogaster.</title>
        <authorList>
            <person name="Jowett T."/>
        </authorList>
    </citation>
    <scope>NUCLEOTIDE SEQUENCE [GENOMIC DNA] OF 1-52</scope>
</reference>
<accession>P11995</accession>
<accession>Q9VYM4</accession>
<comment type="function">
    <text evidence="1">Larval storage protein (LSP) which may serve as a store of amino acids for synthesis of adult proteins.</text>
</comment>
<comment type="subunit">
    <text>Heterohexamer, composed of three subunits, alpha, beta and gamma.</text>
</comment>
<comment type="subcellular location">
    <subcellularLocation>
        <location evidence="3">Secreted</location>
        <location evidence="3">Extracellular space</location>
    </subcellularLocation>
</comment>
<comment type="tissue specificity">
    <text evidence="3">Larval hemolymph.</text>
</comment>
<comment type="similarity">
    <text evidence="4">Belongs to the hemocyanin family.</text>
</comment>
<feature type="signal peptide" evidence="2">
    <location>
        <begin position="1"/>
        <end position="16"/>
    </location>
</feature>
<feature type="chain" id="PRO_0000013333" description="Larval serum protein 1 alpha chain">
    <location>
        <begin position="17"/>
        <end position="816"/>
    </location>
</feature>
<name>LSP1A_DROME</name>
<evidence type="ECO:0000250" key="1"/>
<evidence type="ECO:0000255" key="2"/>
<evidence type="ECO:0000269" key="3">
    <source>
    </source>
</evidence>
<evidence type="ECO:0000305" key="4"/>